<reference key="1">
    <citation type="journal article" date="2006" name="J. Bacteriol.">
        <title>The Methanosarcina barkeri genome: comparative analysis with Methanosarcina acetivorans and Methanosarcina mazei reveals extensive rearrangement within methanosarcinal genomes.</title>
        <authorList>
            <person name="Maeder D.L."/>
            <person name="Anderson I."/>
            <person name="Brettin T.S."/>
            <person name="Bruce D.C."/>
            <person name="Gilna P."/>
            <person name="Han C.S."/>
            <person name="Lapidus A."/>
            <person name="Metcalf W.W."/>
            <person name="Saunders E."/>
            <person name="Tapia R."/>
            <person name="Sowers K.R."/>
        </authorList>
    </citation>
    <scope>NUCLEOTIDE SEQUENCE [LARGE SCALE GENOMIC DNA]</scope>
    <source>
        <strain>Fusaro / DSM 804</strain>
    </source>
</reference>
<comment type="catalytic activity">
    <reaction evidence="1">
        <text>D-glyceraldehyde 3-phosphate + phosphate + NADP(+) = (2R)-3-phospho-glyceroyl phosphate + NADPH + H(+)</text>
        <dbReference type="Rhea" id="RHEA:10296"/>
        <dbReference type="ChEBI" id="CHEBI:15378"/>
        <dbReference type="ChEBI" id="CHEBI:43474"/>
        <dbReference type="ChEBI" id="CHEBI:57604"/>
        <dbReference type="ChEBI" id="CHEBI:57783"/>
        <dbReference type="ChEBI" id="CHEBI:58349"/>
        <dbReference type="ChEBI" id="CHEBI:59776"/>
        <dbReference type="EC" id="1.2.1.59"/>
    </reaction>
</comment>
<comment type="catalytic activity">
    <reaction evidence="1">
        <text>D-glyceraldehyde 3-phosphate + phosphate + NAD(+) = (2R)-3-phospho-glyceroyl phosphate + NADH + H(+)</text>
        <dbReference type="Rhea" id="RHEA:10300"/>
        <dbReference type="ChEBI" id="CHEBI:15378"/>
        <dbReference type="ChEBI" id="CHEBI:43474"/>
        <dbReference type="ChEBI" id="CHEBI:57540"/>
        <dbReference type="ChEBI" id="CHEBI:57604"/>
        <dbReference type="ChEBI" id="CHEBI:57945"/>
        <dbReference type="ChEBI" id="CHEBI:59776"/>
        <dbReference type="EC" id="1.2.1.59"/>
    </reaction>
</comment>
<comment type="pathway">
    <text evidence="1">Carbohydrate degradation; glycolysis; pyruvate from D-glyceraldehyde 3-phosphate: step 1/5.</text>
</comment>
<comment type="subunit">
    <text evidence="1">Homotetramer.</text>
</comment>
<comment type="subcellular location">
    <subcellularLocation>
        <location evidence="1">Cytoplasm</location>
    </subcellularLocation>
</comment>
<comment type="similarity">
    <text evidence="1">Belongs to the glyceraldehyde-3-phosphate dehydrogenase family.</text>
</comment>
<organism>
    <name type="scientific">Methanosarcina barkeri (strain Fusaro / DSM 804)</name>
    <dbReference type="NCBI Taxonomy" id="269797"/>
    <lineage>
        <taxon>Archaea</taxon>
        <taxon>Methanobacteriati</taxon>
        <taxon>Methanobacteriota</taxon>
        <taxon>Stenosarchaea group</taxon>
        <taxon>Methanomicrobia</taxon>
        <taxon>Methanosarcinales</taxon>
        <taxon>Methanosarcinaceae</taxon>
        <taxon>Methanosarcina</taxon>
    </lineage>
</organism>
<protein>
    <recommendedName>
        <fullName evidence="1">Glyceraldehyde-3-phosphate dehydrogenase 1</fullName>
        <shortName evidence="1">GAPDH 1</shortName>
        <ecNumber evidence="1">1.2.1.59</ecNumber>
    </recommendedName>
    <alternativeName>
        <fullName evidence="1">NAD(P)-dependent glyceraldehyde-3-phosphate dehydrogenase 1</fullName>
    </alternativeName>
</protein>
<evidence type="ECO:0000255" key="1">
    <source>
        <dbReference type="HAMAP-Rule" id="MF_00559"/>
    </source>
</evidence>
<proteinExistence type="inferred from homology"/>
<keyword id="KW-0963">Cytoplasm</keyword>
<keyword id="KW-0324">Glycolysis</keyword>
<keyword id="KW-0520">NAD</keyword>
<keyword id="KW-0521">NADP</keyword>
<keyword id="KW-0560">Oxidoreductase</keyword>
<gene>
    <name evidence="1" type="primary">gap1</name>
    <name type="ordered locus">Mbar_A2189</name>
</gene>
<name>G3P1_METBF</name>
<dbReference type="EC" id="1.2.1.59" evidence="1"/>
<dbReference type="EMBL" id="CP000099">
    <property type="protein sequence ID" value="AAZ71117.1"/>
    <property type="molecule type" value="Genomic_DNA"/>
</dbReference>
<dbReference type="SMR" id="Q46AH5"/>
<dbReference type="STRING" id="269797.Mbar_A2189"/>
<dbReference type="PaxDb" id="269797-Mbar_A2189"/>
<dbReference type="KEGG" id="mba:Mbar_A2189"/>
<dbReference type="eggNOG" id="arCOG00493">
    <property type="taxonomic scope" value="Archaea"/>
</dbReference>
<dbReference type="HOGENOM" id="CLU_069533_0_0_2"/>
<dbReference type="OrthoDB" id="295712at2157"/>
<dbReference type="UniPathway" id="UPA00109">
    <property type="reaction ID" value="UER00184"/>
</dbReference>
<dbReference type="GO" id="GO:0005737">
    <property type="term" value="C:cytoplasm"/>
    <property type="evidence" value="ECO:0007669"/>
    <property type="project" value="UniProtKB-SubCell"/>
</dbReference>
<dbReference type="GO" id="GO:0008839">
    <property type="term" value="F:4-hydroxy-tetrahydrodipicolinate reductase"/>
    <property type="evidence" value="ECO:0007669"/>
    <property type="project" value="InterPro"/>
</dbReference>
<dbReference type="GO" id="GO:0004365">
    <property type="term" value="F:glyceraldehyde-3-phosphate dehydrogenase (NAD+) (phosphorylating) activity"/>
    <property type="evidence" value="ECO:0007669"/>
    <property type="project" value="UniProtKB-UniRule"/>
</dbReference>
<dbReference type="GO" id="GO:0047100">
    <property type="term" value="F:glyceraldehyde-3-phosphate dehydrogenase (NADP+) (phosphorylating) activity"/>
    <property type="evidence" value="ECO:0007669"/>
    <property type="project" value="RHEA"/>
</dbReference>
<dbReference type="GO" id="GO:0051287">
    <property type="term" value="F:NAD binding"/>
    <property type="evidence" value="ECO:0007669"/>
    <property type="project" value="InterPro"/>
</dbReference>
<dbReference type="GO" id="GO:0050661">
    <property type="term" value="F:NADP binding"/>
    <property type="evidence" value="ECO:0007669"/>
    <property type="project" value="InterPro"/>
</dbReference>
<dbReference type="GO" id="GO:0006096">
    <property type="term" value="P:glycolytic process"/>
    <property type="evidence" value="ECO:0007669"/>
    <property type="project" value="UniProtKB-UniRule"/>
</dbReference>
<dbReference type="GO" id="GO:0009089">
    <property type="term" value="P:lysine biosynthetic process via diaminopimelate"/>
    <property type="evidence" value="ECO:0007669"/>
    <property type="project" value="InterPro"/>
</dbReference>
<dbReference type="CDD" id="cd18127">
    <property type="entry name" value="GAPDH_II_C"/>
    <property type="match status" value="1"/>
</dbReference>
<dbReference type="CDD" id="cd02278">
    <property type="entry name" value="GAPDH_II_N"/>
    <property type="match status" value="1"/>
</dbReference>
<dbReference type="Gene3D" id="3.30.360.10">
    <property type="entry name" value="Dihydrodipicolinate Reductase, domain 2"/>
    <property type="match status" value="1"/>
</dbReference>
<dbReference type="Gene3D" id="3.40.50.720">
    <property type="entry name" value="NAD(P)-binding Rossmann-like Domain"/>
    <property type="match status" value="1"/>
</dbReference>
<dbReference type="HAMAP" id="MF_00559">
    <property type="entry name" value="G3P_dehdrog_arch"/>
    <property type="match status" value="1"/>
</dbReference>
<dbReference type="InterPro" id="IPR000846">
    <property type="entry name" value="DapB_N"/>
</dbReference>
<dbReference type="InterPro" id="IPR020831">
    <property type="entry name" value="GlycerAld/Erythrose_P_DH"/>
</dbReference>
<dbReference type="InterPro" id="IPR020830">
    <property type="entry name" value="GlycerAld_3-P_DH_AS"/>
</dbReference>
<dbReference type="InterPro" id="IPR020829">
    <property type="entry name" value="GlycerAld_3-P_DH_cat"/>
</dbReference>
<dbReference type="InterPro" id="IPR020828">
    <property type="entry name" value="GlycerAld_3-P_DH_NAD(P)-bd"/>
</dbReference>
<dbReference type="InterPro" id="IPR006436">
    <property type="entry name" value="Glyceraldehyde-3-P_DH_2_arc"/>
</dbReference>
<dbReference type="InterPro" id="IPR036291">
    <property type="entry name" value="NAD(P)-bd_dom_sf"/>
</dbReference>
<dbReference type="NCBIfam" id="TIGR01546">
    <property type="entry name" value="GAPDH-II_archae"/>
    <property type="match status" value="1"/>
</dbReference>
<dbReference type="NCBIfam" id="NF003251">
    <property type="entry name" value="PRK04207.1"/>
    <property type="match status" value="1"/>
</dbReference>
<dbReference type="Pfam" id="PF01113">
    <property type="entry name" value="DapB_N"/>
    <property type="match status" value="1"/>
</dbReference>
<dbReference type="Pfam" id="PF02800">
    <property type="entry name" value="Gp_dh_C"/>
    <property type="match status" value="1"/>
</dbReference>
<dbReference type="PIRSF" id="PIRSF000149">
    <property type="entry name" value="GAP_DH"/>
    <property type="match status" value="1"/>
</dbReference>
<dbReference type="SMART" id="SM00846">
    <property type="entry name" value="Gp_dh_N"/>
    <property type="match status" value="1"/>
</dbReference>
<dbReference type="SUPFAM" id="SSF55347">
    <property type="entry name" value="Glyceraldehyde-3-phosphate dehydrogenase-like, C-terminal domain"/>
    <property type="match status" value="1"/>
</dbReference>
<dbReference type="SUPFAM" id="SSF51735">
    <property type="entry name" value="NAD(P)-binding Rossmann-fold domains"/>
    <property type="match status" value="1"/>
</dbReference>
<dbReference type="PROSITE" id="PS00071">
    <property type="entry name" value="GAPDH"/>
    <property type="match status" value="1"/>
</dbReference>
<sequence length="338" mass="36958">MVKAKIAVNGYGTIGKRVADAVRAQDDMEVIGISKTKPNYEAAVAHQIGYDIYAPAANLEAFEKAGMPAAGTIEEMVEKADLVVDCTPGGIGEKNKPMYEKAGVKAIWQGGEDHSLAGFSFNAICNYEQAVGRDLVRVVSCNTTALCRAIYPIDKELGVKKARVVLARRATDPNDVKKGPINAIVPDPIKLPSHHGPDVKSVLPQINITSAALKIPTTLMHVHTVNMEVEKDCTVDDVKNIFGSQPRIRFVGQGMSSTAEIMEFARDMKRPRNDMWENCIWPESITVGDKELYFFQAVHQESIVVPENVDAIRAMMEFESDGAKSIEKTNKAIGLSKK</sequence>
<accession>Q46AH5</accession>
<feature type="chain" id="PRO_0000232390" description="Glyceraldehyde-3-phosphate dehydrogenase 1">
    <location>
        <begin position="1"/>
        <end position="338"/>
    </location>
</feature>
<feature type="active site" description="Nucleophile" evidence="1">
    <location>
        <position position="141"/>
    </location>
</feature>
<feature type="binding site" evidence="1">
    <location>
        <begin position="13"/>
        <end position="14"/>
    </location>
    <ligand>
        <name>NAD(+)</name>
        <dbReference type="ChEBI" id="CHEBI:57540"/>
    </ligand>
</feature>
<feature type="binding site" evidence="1">
    <location>
        <position position="111"/>
    </location>
    <ligand>
        <name>NAD(+)</name>
        <dbReference type="ChEBI" id="CHEBI:57540"/>
    </ligand>
</feature>
<feature type="binding site" evidence="1">
    <location>
        <begin position="140"/>
        <end position="142"/>
    </location>
    <ligand>
        <name>D-glyceraldehyde 3-phosphate</name>
        <dbReference type="ChEBI" id="CHEBI:59776"/>
    </ligand>
</feature>
<feature type="binding site" evidence="1">
    <location>
        <position position="169"/>
    </location>
    <ligand>
        <name>NAD(+)</name>
        <dbReference type="ChEBI" id="CHEBI:57540"/>
    </ligand>
</feature>
<feature type="binding site" evidence="1">
    <location>
        <begin position="195"/>
        <end position="196"/>
    </location>
    <ligand>
        <name>D-glyceraldehyde 3-phosphate</name>
        <dbReference type="ChEBI" id="CHEBI:59776"/>
    </ligand>
</feature>
<feature type="binding site" evidence="1">
    <location>
        <position position="300"/>
    </location>
    <ligand>
        <name>NAD(+)</name>
        <dbReference type="ChEBI" id="CHEBI:57540"/>
    </ligand>
</feature>